<dbReference type="EC" id="2.1.1.6" evidence="2"/>
<dbReference type="EMBL" id="EU627091">
    <property type="protein sequence ID" value="ACF40901.1"/>
    <property type="molecule type" value="mRNA"/>
</dbReference>
<dbReference type="EMBL" id="DQ854743">
    <property type="protein sequence ID" value="ABI37014.1"/>
    <property type="molecule type" value="mRNA"/>
</dbReference>
<dbReference type="CCDS" id="CCDS40044.1"/>
<dbReference type="RefSeq" id="NP_001075148.1">
    <property type="nucleotide sequence ID" value="NM_001081679.1"/>
</dbReference>
<dbReference type="RefSeq" id="NP_001269017.1">
    <property type="nucleotide sequence ID" value="NM_001282088.1"/>
</dbReference>
<dbReference type="RefSeq" id="XP_017167892.1">
    <property type="nucleotide sequence ID" value="XM_017312403.3"/>
</dbReference>
<dbReference type="SMR" id="A1Y9I9"/>
<dbReference type="FunCoup" id="A1Y9I9">
    <property type="interactions" value="137"/>
</dbReference>
<dbReference type="STRING" id="10090.ENSMUSP00000102582"/>
<dbReference type="iPTMnet" id="A1Y9I9"/>
<dbReference type="PhosphoSitePlus" id="A1Y9I9"/>
<dbReference type="PaxDb" id="10090-ENSMUSP00000102582"/>
<dbReference type="Ensembl" id="ENSMUST00000106969.9">
    <property type="protein sequence ID" value="ENSMUSP00000102582.2"/>
    <property type="gene ID" value="ENSMUSG00000078630.9"/>
</dbReference>
<dbReference type="Ensembl" id="ENSMUST00000106970.3">
    <property type="protein sequence ID" value="ENSMUSP00000102583.2"/>
    <property type="gene ID" value="ENSMUSG00000078630.9"/>
</dbReference>
<dbReference type="GeneID" id="791260"/>
<dbReference type="KEGG" id="mmu:791260"/>
<dbReference type="UCSC" id="uc009ipu.1">
    <property type="organism name" value="mouse"/>
</dbReference>
<dbReference type="AGR" id="MGI:3769724"/>
<dbReference type="CTD" id="120356740"/>
<dbReference type="MGI" id="MGI:3769724">
    <property type="gene designation" value="Tomt"/>
</dbReference>
<dbReference type="VEuPathDB" id="HostDB:ENSMUSG00000078630"/>
<dbReference type="eggNOG" id="KOG1663">
    <property type="taxonomic scope" value="Eukaryota"/>
</dbReference>
<dbReference type="GeneTree" id="ENSGT00940000161220"/>
<dbReference type="HOGENOM" id="CLU_050461_5_0_1"/>
<dbReference type="InParanoid" id="A1Y9I9"/>
<dbReference type="OMA" id="KWRVHRT"/>
<dbReference type="OrthoDB" id="186626at2759"/>
<dbReference type="PhylomeDB" id="A1Y9I9"/>
<dbReference type="TreeFam" id="TF329140"/>
<dbReference type="Reactome" id="R-MMU-379397">
    <property type="pathway name" value="Enzymatic degradation of dopamine by COMT"/>
</dbReference>
<dbReference type="SABIO-RK" id="A1Y9I9"/>
<dbReference type="BioGRID-ORCS" id="791260">
    <property type="hits" value="1 hit in 76 CRISPR screens"/>
</dbReference>
<dbReference type="PRO" id="PR:A1Y9I9"/>
<dbReference type="Proteomes" id="UP000000589">
    <property type="component" value="Chromosome 7"/>
</dbReference>
<dbReference type="RNAct" id="A1Y9I9">
    <property type="molecule type" value="protein"/>
</dbReference>
<dbReference type="Bgee" id="ENSMUSG00000078630">
    <property type="expression patterns" value="Expressed in blastoderm cell in morula and 45 other cell types or tissues"/>
</dbReference>
<dbReference type="GO" id="GO:0045177">
    <property type="term" value="C:apical part of cell"/>
    <property type="evidence" value="ECO:0000314"/>
    <property type="project" value="UniProtKB"/>
</dbReference>
<dbReference type="GO" id="GO:0005737">
    <property type="term" value="C:cytoplasm"/>
    <property type="evidence" value="ECO:0000314"/>
    <property type="project" value="UniProtKB"/>
</dbReference>
<dbReference type="GO" id="GO:0005783">
    <property type="term" value="C:endoplasmic reticulum"/>
    <property type="evidence" value="ECO:0000314"/>
    <property type="project" value="UniProtKB"/>
</dbReference>
<dbReference type="GO" id="GO:0016206">
    <property type="term" value="F:catechol O-methyltransferase activity"/>
    <property type="evidence" value="ECO:0000314"/>
    <property type="project" value="UniProtKB"/>
</dbReference>
<dbReference type="GO" id="GO:0060117">
    <property type="term" value="P:auditory receptor cell development"/>
    <property type="evidence" value="ECO:0000315"/>
    <property type="project" value="UniProtKB"/>
</dbReference>
<dbReference type="GO" id="GO:0042424">
    <property type="term" value="P:catecholamine catabolic process"/>
    <property type="evidence" value="ECO:0000314"/>
    <property type="project" value="UniProtKB"/>
</dbReference>
<dbReference type="GO" id="GO:0032259">
    <property type="term" value="P:methylation"/>
    <property type="evidence" value="ECO:0007669"/>
    <property type="project" value="UniProtKB-KW"/>
</dbReference>
<dbReference type="GO" id="GO:1904591">
    <property type="term" value="P:positive regulation of protein import"/>
    <property type="evidence" value="ECO:0000315"/>
    <property type="project" value="UniProtKB"/>
</dbReference>
<dbReference type="GO" id="GO:0007605">
    <property type="term" value="P:sensory perception of sound"/>
    <property type="evidence" value="ECO:0000315"/>
    <property type="project" value="UniProtKB"/>
</dbReference>
<dbReference type="CDD" id="cd02440">
    <property type="entry name" value="AdoMet_MTases"/>
    <property type="match status" value="1"/>
</dbReference>
<dbReference type="FunFam" id="3.40.50.150:FF:000054">
    <property type="entry name" value="Catechol O-methyltransferase"/>
    <property type="match status" value="1"/>
</dbReference>
<dbReference type="Gene3D" id="3.40.50.150">
    <property type="entry name" value="Vaccinia Virus protein VP39"/>
    <property type="match status" value="1"/>
</dbReference>
<dbReference type="InterPro" id="IPR029063">
    <property type="entry name" value="SAM-dependent_MTases_sf"/>
</dbReference>
<dbReference type="InterPro" id="IPR002935">
    <property type="entry name" value="SAM_O-MeTrfase"/>
</dbReference>
<dbReference type="PANTHER" id="PTHR43836">
    <property type="entry name" value="CATECHOL O-METHYLTRANSFERASE 1-RELATED"/>
    <property type="match status" value="1"/>
</dbReference>
<dbReference type="PANTHER" id="PTHR43836:SF1">
    <property type="entry name" value="TRANSMEMBRANE O-METHYLTRANSFERASE"/>
    <property type="match status" value="1"/>
</dbReference>
<dbReference type="Pfam" id="PF01596">
    <property type="entry name" value="Methyltransf_3"/>
    <property type="match status" value="1"/>
</dbReference>
<dbReference type="SUPFAM" id="SSF53335">
    <property type="entry name" value="S-adenosyl-L-methionine-dependent methyltransferases"/>
    <property type="match status" value="1"/>
</dbReference>
<dbReference type="PROSITE" id="PS51682">
    <property type="entry name" value="SAM_OMT_I"/>
    <property type="match status" value="1"/>
</dbReference>
<reference key="1">
    <citation type="journal article" date="2008" name="Nat. Genet.">
        <title>Mutations of LRTOMT, a fusion gene with alternative reading frames, cause nonsyndromic deafness in humans.</title>
        <authorList>
            <person name="Ahmed Z.M."/>
            <person name="Masmoudi S."/>
            <person name="Kalay E."/>
            <person name="Belyantseva I.A."/>
            <person name="Mosrati M.A."/>
            <person name="Collin R.W.J."/>
            <person name="Riazuddin S."/>
            <person name="Hmani-Aifa M."/>
            <person name="Venselaar H."/>
            <person name="Kawar M.N."/>
            <person name="Tlili A."/>
            <person name="van der Zwaag B."/>
            <person name="Khan S.Y."/>
            <person name="Ayadi L."/>
            <person name="Riazuddin S.A."/>
            <person name="Morell R.J."/>
            <person name="Griffith A.J."/>
            <person name="Charfedine I."/>
            <person name="Caylan R."/>
            <person name="Oostrik J."/>
            <person name="Karaguzel A."/>
            <person name="Ghorbel A."/>
            <person name="Riazuddin S."/>
            <person name="Friedman T.B."/>
            <person name="Ayadi H."/>
            <person name="Kremer H."/>
        </authorList>
    </citation>
    <scope>NUCLEOTIDE SEQUENCE [MRNA]</scope>
    <scope>SUBCELLULAR LOCATION</scope>
    <scope>TISSUE SPECIFICITY</scope>
    <scope>DEVELOPMENTAL STAGE</scope>
    <source>
        <strain>C57BL/6J</strain>
        <tissue>Brain</tissue>
    </source>
</reference>
<reference evidence="8 10" key="2">
    <citation type="journal article" date="2008" name="Proc. Natl. Acad. Sci. U.S.A.">
        <title>A catechol-O-methyltransferase that is essential for auditory function in mice and humans.</title>
        <authorList>
            <person name="Du X."/>
            <person name="Schwander M."/>
            <person name="Moresco E.M.Y."/>
            <person name="Viviani P."/>
            <person name="Haller C."/>
            <person name="Hildebrand M.S."/>
            <person name="Pak K."/>
            <person name="Tarantino L."/>
            <person name="Roberts A."/>
            <person name="Richardson H."/>
            <person name="Koob G."/>
            <person name="Najmabadi H."/>
            <person name="Ryan A.F."/>
            <person name="Smith R.J.H."/>
            <person name="Mueller U."/>
            <person name="Beutler B."/>
        </authorList>
    </citation>
    <scope>NUCLEOTIDE SEQUENCE [MRNA]</scope>
    <scope>FUNCTION</scope>
    <scope>CATALYTIC ACTIVITY</scope>
    <scope>TISSUE SPECIFICITY</scope>
    <scope>MUTAGENESIS OF ARG-48</scope>
    <source>
        <strain evidence="10">C57BL/6J</strain>
        <tissue evidence="10">Brain</tissue>
    </source>
</reference>
<reference key="3">
    <citation type="journal article" date="2017" name="Elife">
        <title>The murine catecholamine methyltransferase mTOMT is essential for mechanotransduction by cochlear hair cells.</title>
        <authorList>
            <person name="Cunningham C.L."/>
            <person name="Wu Z."/>
            <person name="Jafari A."/>
            <person name="Zhao B."/>
            <person name="Schrode K."/>
            <person name="Harkins-Perry S."/>
            <person name="Lauer A."/>
            <person name="Mueller U."/>
        </authorList>
    </citation>
    <scope>FUNCTION</scope>
    <scope>INTERACTION WITH LHFPL5; PCDH15; TMC1; TMC2 AND TMIE</scope>
    <scope>SUBCELLULAR LOCATION</scope>
    <scope>DISRUPTION PHENOTYPE</scope>
    <scope>MUTAGENESIS OF 22-HIS--ARG-25; ARG-48 AND TYR-108</scope>
</reference>
<reference key="4">
    <citation type="journal article" date="2017" name="Elife">
        <title>Integration of Tmc1/2 into the mechanotransduction complex in zebrafish hair cells is regulated by Transmembrane O-methyltransferase (Tomt).</title>
        <authorList>
            <person name="Erickson T."/>
            <person name="Morgan C.P."/>
            <person name="Olt J."/>
            <person name="Hardy K."/>
            <person name="Busch-Nentwich E."/>
            <person name="Maeda R."/>
            <person name="Clemens R."/>
            <person name="Krey J.F."/>
            <person name="Nechiporuk A."/>
            <person name="Barr-Gillespie P.G."/>
            <person name="Marcotti W."/>
            <person name="Nicolson T."/>
        </authorList>
    </citation>
    <scope>INTERACTION WITH TMC1</scope>
    <scope>MUTAGENESIS OF HIS-183</scope>
</reference>
<comment type="function">
    <text evidence="2 4">Catalyzes the O-methylation, and thereby the inactivation, of catecholamine neurotransmitters and catechol hormones (PubMed:18794526). Required for auditory function (PubMed:18794526, PubMed:28504928). Component of the cochlear hair cell's mechanotransduction (MET) machinery. Involved in the assembly of the asymmetric tip-link MET complex. Required for transportation of TMC1 and TMC2 proteins into the mechanically sensitive stereocilia of the hair cells. The function in MET is independent of the enzymatic activity (PubMed:28504928).</text>
</comment>
<comment type="catalytic activity">
    <reaction evidence="2">
        <text>a catechol + S-adenosyl-L-methionine = a guaiacol + S-adenosyl-L-homocysteine + H(+)</text>
        <dbReference type="Rhea" id="RHEA:17877"/>
        <dbReference type="ChEBI" id="CHEBI:15378"/>
        <dbReference type="ChEBI" id="CHEBI:33566"/>
        <dbReference type="ChEBI" id="CHEBI:57856"/>
        <dbReference type="ChEBI" id="CHEBI:59789"/>
        <dbReference type="ChEBI" id="CHEBI:134251"/>
        <dbReference type="EC" id="2.1.1.6"/>
    </reaction>
    <physiologicalReaction direction="left-to-right" evidence="9">
        <dbReference type="Rhea" id="RHEA:17878"/>
    </physiologicalReaction>
</comment>
<comment type="subunit">
    <text evidence="4 5">Interacts with LHFPL5, PCDH15, TMC1, TMC2 and TMIE (PubMed:28504928). The interaction of TOMT with TMC1 and TMC2 is required for the transportation of TMC1/2 into the stereocilia of hair cells (PubMed:28504928, PubMed:28534737). Interacts directly with TMC1 (PubMed:28534737).</text>
</comment>
<comment type="subcellular location">
    <subcellularLocation>
        <location evidence="3 4">Cytoplasm</location>
    </subcellularLocation>
    <subcellularLocation>
        <location evidence="4">Endoplasmic reticulum</location>
    </subcellularLocation>
    <text evidence="4">Localized to the cell body of the cochlear hair cells, but is not present in the stereocilia. Present but not restricted to the apical cistern, Hensen's body and the subsurface cistern.</text>
</comment>
<comment type="tissue specificity">
    <text evidence="2 3">Widely expressed with high levels in outer and inner hair cells of the cochlea and vestibule.</text>
</comment>
<comment type="developmental stage">
    <text evidence="3">Not detected in the embryo at 12.5 dpc. At 14.5 dpc, expressed in the developing inner ear. At 16.5 dpc, expressed in the utricle and saccule. At 18.5 dpc, expressed specifically in the region of the sensory cells of the cochlea, utricle, saccule and crista ampullaris.</text>
</comment>
<comment type="disruption phenotype">
    <text evidence="4">Absence of auditory brain stem response (ABR) to click stimuli demonstrates that the mice are profoundly deaf. Normal hair bundle morphology as at postnatal day (P) 5 the sensory epithelia are patterned into three rows of outer hair cells (OHCs) and one row of inner hair cells (IHCs). The bundles of OHCs appear similar in size to those of wild-type mice and form a normal staircase pattern. Hair cells are maintained in the presence of gentamicin, an aminoglycoside antibiotic that enters hair cells through their transduction channels and normally causes hair cell death. No difference in the expression or localization of tip link proteins CDH23 and PCDH15 or ATP2B2, MYO7A, ESPN and WHRN proteins at P5-P8 in hair bundles of hair cells. Normal localization of LHFPL5 and TMIE in OHCs, but TMC1 and TMC2 are absent from the hair bundles of OHCs.</text>
</comment>
<comment type="similarity">
    <text evidence="1">Belongs to the class I-like SAM-binding methyltransferase superfamily. Cation-dependent O-methyltransferase family.</text>
</comment>
<comment type="caution">
    <text evidence="8">Despite its name, the murine TOMT protein does not contain a transmembrane region in contrast to primate orthologs.</text>
</comment>
<evidence type="ECO:0000255" key="1">
    <source>
        <dbReference type="PROSITE-ProRule" id="PRU01019"/>
    </source>
</evidence>
<evidence type="ECO:0000269" key="2">
    <source>
    </source>
</evidence>
<evidence type="ECO:0000269" key="3">
    <source>
    </source>
</evidence>
<evidence type="ECO:0000269" key="4">
    <source>
    </source>
</evidence>
<evidence type="ECO:0000269" key="5">
    <source>
    </source>
</evidence>
<evidence type="ECO:0000303" key="6">
    <source>
    </source>
</evidence>
<evidence type="ECO:0000303" key="7">
    <source>
    </source>
</evidence>
<evidence type="ECO:0000305" key="8"/>
<evidence type="ECO:0000305" key="9">
    <source>
    </source>
</evidence>
<evidence type="ECO:0000312" key="10">
    <source>
        <dbReference type="EMBL" id="ABI37014.1"/>
    </source>
</evidence>
<evidence type="ECO:0000312" key="11">
    <source>
        <dbReference type="MGI" id="MGI:3769724"/>
    </source>
</evidence>
<organism>
    <name type="scientific">Mus musculus</name>
    <name type="common">Mouse</name>
    <dbReference type="NCBI Taxonomy" id="10090"/>
    <lineage>
        <taxon>Eukaryota</taxon>
        <taxon>Metazoa</taxon>
        <taxon>Chordata</taxon>
        <taxon>Craniata</taxon>
        <taxon>Vertebrata</taxon>
        <taxon>Euteleostomi</taxon>
        <taxon>Mammalia</taxon>
        <taxon>Eutheria</taxon>
        <taxon>Euarchontoglires</taxon>
        <taxon>Glires</taxon>
        <taxon>Rodentia</taxon>
        <taxon>Myomorpha</taxon>
        <taxon>Muroidea</taxon>
        <taxon>Muridae</taxon>
        <taxon>Murinae</taxon>
        <taxon>Mus</taxon>
        <taxon>Mus</taxon>
    </lineage>
</organism>
<gene>
    <name evidence="11" type="primary">Tomt</name>
    <name evidence="6" type="synonym">Comt2</name>
</gene>
<name>TOMT_MOUSE</name>
<protein>
    <recommendedName>
        <fullName evidence="8">Transmembrane O-methyltransferase homolog</fullName>
        <shortName evidence="7">mTOMT</shortName>
        <ecNumber evidence="2">2.1.1.6</ecNumber>
    </recommendedName>
    <alternativeName>
        <fullName evidence="6">Catechol O-methyltransferase 2</fullName>
    </alternativeName>
</protein>
<keyword id="KW-0128">Catecholamine metabolism</keyword>
<keyword id="KW-0963">Cytoplasm</keyword>
<keyword id="KW-0209">Deafness</keyword>
<keyword id="KW-0256">Endoplasmic reticulum</keyword>
<keyword id="KW-1009">Hearing</keyword>
<keyword id="KW-0489">Methyltransferase</keyword>
<keyword id="KW-0531">Neurotransmitter degradation</keyword>
<keyword id="KW-1185">Reference proteome</keyword>
<keyword id="KW-0949">S-adenosyl-L-methionine</keyword>
<keyword id="KW-0808">Transferase</keyword>
<proteinExistence type="evidence at protein level"/>
<feature type="chain" id="PRO_0000354094" description="Transmembrane O-methyltransferase homolog">
    <location>
        <begin position="1"/>
        <end position="258"/>
    </location>
</feature>
<feature type="binding site" evidence="1">
    <location>
        <position position="104"/>
    </location>
    <ligand>
        <name>S-adenosyl-L-methionine</name>
        <dbReference type="ChEBI" id="CHEBI:59789"/>
    </ligand>
</feature>
<feature type="binding site" evidence="1">
    <location>
        <begin position="106"/>
        <end position="107"/>
    </location>
    <ligand>
        <name>S-adenosyl-L-methionine</name>
        <dbReference type="ChEBI" id="CHEBI:59789"/>
    </ligand>
</feature>
<feature type="binding site" evidence="1">
    <location>
        <position position="112"/>
    </location>
    <ligand>
        <name>S-adenosyl-L-methionine</name>
        <dbReference type="ChEBI" id="CHEBI:59789"/>
    </ligand>
</feature>
<feature type="binding site" evidence="1">
    <location>
        <position position="130"/>
    </location>
    <ligand>
        <name>S-adenosyl-L-methionine</name>
        <dbReference type="ChEBI" id="CHEBI:59789"/>
    </ligand>
</feature>
<feature type="binding site" evidence="1">
    <location>
        <position position="160"/>
    </location>
    <ligand>
        <name>S-adenosyl-L-methionine</name>
        <dbReference type="ChEBI" id="CHEBI:59789"/>
    </ligand>
</feature>
<feature type="mutagenesis site" description="Absence of auditory brain stem response (ABR) to click stimuli demonstrates that the mice are profoundly deaf. Distortion product otoacoustic emissions (DPOAEs) are absent at 4 weeks of age at all frequencies tested. Normal hair bundle morphology as at postnatal day (P) 5 the sensory epithelia are patterned into three rows of outer hair cells (OHCs) and one row of inner hair cells (IHCs). The bundles of OHCs appear similar in size to those of wild-type mice and form a normal staircase pattern." evidence="4">
    <location>
        <begin position="22"/>
        <end position="25"/>
    </location>
</feature>
<feature type="mutagenesis site" description="In add; reduces methyltransferase activity; causes hyperkinesis, circling, head-tossing, aggression, progressive degeneration of the organ of Corti, hair cell defects and profound deafness. Distortion product otoacoustic emissions (DPOAEs) are absent at 4 weeks of age at all frequencies tested. At postnatal day (P) 5 the sensory epithelia are patterned into three rows of outer hair cells (OHCs) and one row of inner hair cells (IHCs) with no obvious structural abnormalities. The bundles of OHCs appear similar in size to those of wild-type mice and form a normal staircase pattern. The hair bundles of OHCs have a slightly more rounded morphology, especially in basal regions of the cochlea. The morphology of IHCs is not significantly altered. Hair cells are maintained in the presence of gentamicin, an aminoglycoside antibiotic that enters hair cells through their transduction channels and normally causes hair cell death. Mechanotransduction currents are very small in P4 hair cells and completely absent in P7 hair cells. Membrane potential, outward-evoked currents and nonlinear capacitance are normal in OHCs. No difference in the expression or localization of tip link proteins CDH23 and PCDH15 or ATP2B2, MYO7A, ESPN and WHRN proteins at P5-P8 in hair bundles of hair cells. No difference in the number of tip links in IHCs and OHCs at P7-P8. No difference in the levels of catecholamines, including norepinephrine, homovanillic acid (HVA) and norepinephrine, or serotonin levels in the inner ear. Loss of reverse polarity currents." evidence="2 4">
    <original>R</original>
    <variation>L</variation>
    <location>
        <position position="48"/>
    </location>
</feature>
<feature type="mutagenesis site" description="Is able to rescue the mechanotransduction defect of L-48." evidence="4">
    <original>Y</original>
    <variation>A</variation>
    <location>
        <position position="108"/>
    </location>
</feature>
<feature type="mutagenesis site" description="Enhanced interaction with TMC1." evidence="5">
    <original>H</original>
    <variation>A</variation>
    <location>
        <position position="183"/>
    </location>
</feature>
<sequence>MSPAIALAFLPLVVTLLVRYRHHFRLLVRTVLLRGFRDCLSGLRIEERAFSYVLTHALPGDPGHILTTLDHWSSCCEYLSHMGPVKGQILMRLVEEKAPACVLELGTYCGYSTLLIARALPPGSRLLTVERDSRTAAVAEKVIRLAGFDEQMVELIAGSSEEVIPRLRAQHQLNRADLVLLAHRPRYYLRDLQLLEAHALLPHGATVLADHVLFPGAPRFLQYTKSCGRYRCRLHHTSLPDFPAIKDGIAQLTYTGPG</sequence>
<accession>A1Y9I9</accession>